<name>ATPL_SALPK</name>
<organism>
    <name type="scientific">Salmonella paratyphi A (strain AKU_12601)</name>
    <dbReference type="NCBI Taxonomy" id="554290"/>
    <lineage>
        <taxon>Bacteria</taxon>
        <taxon>Pseudomonadati</taxon>
        <taxon>Pseudomonadota</taxon>
        <taxon>Gammaproteobacteria</taxon>
        <taxon>Enterobacterales</taxon>
        <taxon>Enterobacteriaceae</taxon>
        <taxon>Salmonella</taxon>
    </lineage>
</organism>
<reference key="1">
    <citation type="journal article" date="2009" name="BMC Genomics">
        <title>Pseudogene accumulation in the evolutionary histories of Salmonella enterica serovars Paratyphi A and Typhi.</title>
        <authorList>
            <person name="Holt K.E."/>
            <person name="Thomson N.R."/>
            <person name="Wain J."/>
            <person name="Langridge G.C."/>
            <person name="Hasan R."/>
            <person name="Bhutta Z.A."/>
            <person name="Quail M.A."/>
            <person name="Norbertczak H."/>
            <person name="Walker D."/>
            <person name="Simmonds M."/>
            <person name="White B."/>
            <person name="Bason N."/>
            <person name="Mungall K."/>
            <person name="Dougan G."/>
            <person name="Parkhill J."/>
        </authorList>
    </citation>
    <scope>NUCLEOTIDE SEQUENCE [LARGE SCALE GENOMIC DNA]</scope>
    <source>
        <strain>AKU_12601</strain>
    </source>
</reference>
<accession>B5BIP1</accession>
<comment type="function">
    <text evidence="1">F(1)F(0) ATP synthase produces ATP from ADP in the presence of a proton or sodium gradient. F-type ATPases consist of two structural domains, F(1) containing the extramembraneous catalytic core and F(0) containing the membrane proton channel, linked together by a central stalk and a peripheral stalk. During catalysis, ATP synthesis in the catalytic domain of F(1) is coupled via a rotary mechanism of the central stalk subunits to proton translocation.</text>
</comment>
<comment type="function">
    <text evidence="1">Key component of the F(0) channel; it plays a direct role in translocation across the membrane. A homomeric c-ring of between 10-14 subunits forms the central stalk rotor element with the F(1) delta and epsilon subunits.</text>
</comment>
<comment type="subunit">
    <text evidence="1">F-type ATPases have 2 components, F(1) - the catalytic core - and F(0) - the membrane proton channel. F(1) has five subunits: alpha(3), beta(3), gamma(1), delta(1), epsilon(1). F(0) has three main subunits: a(1), b(2) and c(10-14). The alpha and beta chains form an alternating ring which encloses part of the gamma chain. F(1) is attached to F(0) by a central stalk formed by the gamma and epsilon chains, while a peripheral stalk is formed by the delta and b chains.</text>
</comment>
<comment type="subcellular location">
    <subcellularLocation>
        <location evidence="1">Cell inner membrane</location>
        <topology evidence="1">Multi-pass membrane protein</topology>
    </subcellularLocation>
</comment>
<comment type="similarity">
    <text evidence="1">Belongs to the ATPase C chain family.</text>
</comment>
<gene>
    <name evidence="1" type="primary">atpE</name>
    <name type="ordered locus">SSPA3464</name>
</gene>
<sequence>MENLNMDLLYMAAAVMMGLAAIGAAIGIGILGGKFLEGAARQPDLIPLLRTQFFIVMGLVDAIPMIAVGLGLYVMFAVA</sequence>
<dbReference type="EMBL" id="FM200053">
    <property type="protein sequence ID" value="CAR61739.1"/>
    <property type="molecule type" value="Genomic_DNA"/>
</dbReference>
<dbReference type="RefSeq" id="WP_000429386.1">
    <property type="nucleotide sequence ID" value="NC_011147.1"/>
</dbReference>
<dbReference type="SMR" id="B5BIP1"/>
<dbReference type="GeneID" id="98390858"/>
<dbReference type="KEGG" id="sek:SSPA3464"/>
<dbReference type="HOGENOM" id="CLU_148047_1_0_6"/>
<dbReference type="Proteomes" id="UP000001869">
    <property type="component" value="Chromosome"/>
</dbReference>
<dbReference type="GO" id="GO:0005886">
    <property type="term" value="C:plasma membrane"/>
    <property type="evidence" value="ECO:0007669"/>
    <property type="project" value="UniProtKB-SubCell"/>
</dbReference>
<dbReference type="GO" id="GO:0045259">
    <property type="term" value="C:proton-transporting ATP synthase complex"/>
    <property type="evidence" value="ECO:0007669"/>
    <property type="project" value="UniProtKB-KW"/>
</dbReference>
<dbReference type="GO" id="GO:0033177">
    <property type="term" value="C:proton-transporting two-sector ATPase complex, proton-transporting domain"/>
    <property type="evidence" value="ECO:0007669"/>
    <property type="project" value="InterPro"/>
</dbReference>
<dbReference type="GO" id="GO:0008289">
    <property type="term" value="F:lipid binding"/>
    <property type="evidence" value="ECO:0007669"/>
    <property type="project" value="UniProtKB-KW"/>
</dbReference>
<dbReference type="GO" id="GO:0046933">
    <property type="term" value="F:proton-transporting ATP synthase activity, rotational mechanism"/>
    <property type="evidence" value="ECO:0007669"/>
    <property type="project" value="UniProtKB-UniRule"/>
</dbReference>
<dbReference type="CDD" id="cd18185">
    <property type="entry name" value="ATP-synt_Fo_c_ATPE"/>
    <property type="match status" value="1"/>
</dbReference>
<dbReference type="FunFam" id="1.20.20.10:FF:000002">
    <property type="entry name" value="ATP synthase subunit c"/>
    <property type="match status" value="1"/>
</dbReference>
<dbReference type="Gene3D" id="1.20.20.10">
    <property type="entry name" value="F1F0 ATP synthase subunit C"/>
    <property type="match status" value="1"/>
</dbReference>
<dbReference type="HAMAP" id="MF_01396">
    <property type="entry name" value="ATP_synth_c_bact"/>
    <property type="match status" value="1"/>
</dbReference>
<dbReference type="InterPro" id="IPR005953">
    <property type="entry name" value="ATP_synth_csu_bac/chlpt"/>
</dbReference>
<dbReference type="InterPro" id="IPR000454">
    <property type="entry name" value="ATP_synth_F0_csu"/>
</dbReference>
<dbReference type="InterPro" id="IPR020537">
    <property type="entry name" value="ATP_synth_F0_csu_DDCD_BS"/>
</dbReference>
<dbReference type="InterPro" id="IPR038662">
    <property type="entry name" value="ATP_synth_F0_csu_sf"/>
</dbReference>
<dbReference type="InterPro" id="IPR002379">
    <property type="entry name" value="ATPase_proteolipid_c-like_dom"/>
</dbReference>
<dbReference type="InterPro" id="IPR035921">
    <property type="entry name" value="F/V-ATP_Csub_sf"/>
</dbReference>
<dbReference type="NCBIfam" id="TIGR01260">
    <property type="entry name" value="ATP_synt_c"/>
    <property type="match status" value="1"/>
</dbReference>
<dbReference type="NCBIfam" id="NF005363">
    <property type="entry name" value="PRK06876.1"/>
    <property type="match status" value="1"/>
</dbReference>
<dbReference type="Pfam" id="PF00137">
    <property type="entry name" value="ATP-synt_C"/>
    <property type="match status" value="1"/>
</dbReference>
<dbReference type="PRINTS" id="PR00124">
    <property type="entry name" value="ATPASEC"/>
</dbReference>
<dbReference type="SUPFAM" id="SSF81333">
    <property type="entry name" value="F1F0 ATP synthase subunit C"/>
    <property type="match status" value="1"/>
</dbReference>
<dbReference type="PROSITE" id="PS00605">
    <property type="entry name" value="ATPASE_C"/>
    <property type="match status" value="1"/>
</dbReference>
<evidence type="ECO:0000255" key="1">
    <source>
        <dbReference type="HAMAP-Rule" id="MF_01396"/>
    </source>
</evidence>
<protein>
    <recommendedName>
        <fullName evidence="1">ATP synthase subunit c</fullName>
    </recommendedName>
    <alternativeName>
        <fullName evidence="1">ATP synthase F(0) sector subunit c</fullName>
    </alternativeName>
    <alternativeName>
        <fullName evidence="1">F-type ATPase subunit c</fullName>
        <shortName evidence="1">F-ATPase subunit c</shortName>
    </alternativeName>
    <alternativeName>
        <fullName evidence="1">Lipid-binding protein</fullName>
    </alternativeName>
</protein>
<proteinExistence type="inferred from homology"/>
<keyword id="KW-0066">ATP synthesis</keyword>
<keyword id="KW-0997">Cell inner membrane</keyword>
<keyword id="KW-1003">Cell membrane</keyword>
<keyword id="KW-0138">CF(0)</keyword>
<keyword id="KW-0375">Hydrogen ion transport</keyword>
<keyword id="KW-0406">Ion transport</keyword>
<keyword id="KW-0446">Lipid-binding</keyword>
<keyword id="KW-0472">Membrane</keyword>
<keyword id="KW-0812">Transmembrane</keyword>
<keyword id="KW-1133">Transmembrane helix</keyword>
<keyword id="KW-0813">Transport</keyword>
<feature type="chain" id="PRO_1000184464" description="ATP synthase subunit c">
    <location>
        <begin position="1"/>
        <end position="79"/>
    </location>
</feature>
<feature type="transmembrane region" description="Helical" evidence="1">
    <location>
        <begin position="11"/>
        <end position="31"/>
    </location>
</feature>
<feature type="transmembrane region" description="Helical" evidence="1">
    <location>
        <begin position="53"/>
        <end position="73"/>
    </location>
</feature>
<feature type="site" description="Reversibly protonated during proton transport" evidence="1">
    <location>
        <position position="61"/>
    </location>
</feature>